<evidence type="ECO:0000255" key="1">
    <source>
        <dbReference type="HAMAP-Rule" id="MF_00682"/>
    </source>
</evidence>
<name>HSCB_YERP3</name>
<keyword id="KW-0143">Chaperone</keyword>
<protein>
    <recommendedName>
        <fullName evidence="1">Co-chaperone protein HscB</fullName>
    </recommendedName>
    <alternativeName>
        <fullName evidence="1">Hsc20</fullName>
    </alternativeName>
</protein>
<gene>
    <name evidence="1" type="primary">hscB</name>
    <name type="ordered locus">YpsIP31758_1171</name>
</gene>
<feature type="chain" id="PRO_1000083054" description="Co-chaperone protein HscB">
    <location>
        <begin position="1"/>
        <end position="174"/>
    </location>
</feature>
<feature type="domain" description="J" evidence="1">
    <location>
        <begin position="2"/>
        <end position="74"/>
    </location>
</feature>
<dbReference type="EMBL" id="CP000720">
    <property type="protein sequence ID" value="ABS47238.1"/>
    <property type="molecule type" value="Genomic_DNA"/>
</dbReference>
<dbReference type="RefSeq" id="WP_011192812.1">
    <property type="nucleotide sequence ID" value="NC_009708.1"/>
</dbReference>
<dbReference type="SMR" id="A7FFX4"/>
<dbReference type="KEGG" id="ypi:YpsIP31758_1171"/>
<dbReference type="HOGENOM" id="CLU_068529_2_0_6"/>
<dbReference type="Proteomes" id="UP000002412">
    <property type="component" value="Chromosome"/>
</dbReference>
<dbReference type="GO" id="GO:1990230">
    <property type="term" value="C:iron-sulfur cluster transfer complex"/>
    <property type="evidence" value="ECO:0007669"/>
    <property type="project" value="TreeGrafter"/>
</dbReference>
<dbReference type="GO" id="GO:0001671">
    <property type="term" value="F:ATPase activator activity"/>
    <property type="evidence" value="ECO:0007669"/>
    <property type="project" value="InterPro"/>
</dbReference>
<dbReference type="GO" id="GO:0051087">
    <property type="term" value="F:protein-folding chaperone binding"/>
    <property type="evidence" value="ECO:0007669"/>
    <property type="project" value="InterPro"/>
</dbReference>
<dbReference type="GO" id="GO:0044571">
    <property type="term" value="P:[2Fe-2S] cluster assembly"/>
    <property type="evidence" value="ECO:0007669"/>
    <property type="project" value="InterPro"/>
</dbReference>
<dbReference type="GO" id="GO:0051259">
    <property type="term" value="P:protein complex oligomerization"/>
    <property type="evidence" value="ECO:0007669"/>
    <property type="project" value="InterPro"/>
</dbReference>
<dbReference type="GO" id="GO:0006457">
    <property type="term" value="P:protein folding"/>
    <property type="evidence" value="ECO:0007669"/>
    <property type="project" value="UniProtKB-UniRule"/>
</dbReference>
<dbReference type="CDD" id="cd06257">
    <property type="entry name" value="DnaJ"/>
    <property type="match status" value="1"/>
</dbReference>
<dbReference type="FunFam" id="1.10.287.110:FF:000008">
    <property type="entry name" value="Co-chaperone protein HscB"/>
    <property type="match status" value="1"/>
</dbReference>
<dbReference type="Gene3D" id="1.10.287.110">
    <property type="entry name" value="DnaJ domain"/>
    <property type="match status" value="1"/>
</dbReference>
<dbReference type="Gene3D" id="1.20.1280.20">
    <property type="entry name" value="HscB, C-terminal domain"/>
    <property type="match status" value="1"/>
</dbReference>
<dbReference type="HAMAP" id="MF_00682">
    <property type="entry name" value="HscB"/>
    <property type="match status" value="1"/>
</dbReference>
<dbReference type="InterPro" id="IPR001623">
    <property type="entry name" value="DnaJ_domain"/>
</dbReference>
<dbReference type="InterPro" id="IPR004640">
    <property type="entry name" value="HscB"/>
</dbReference>
<dbReference type="InterPro" id="IPR036386">
    <property type="entry name" value="HscB_C_sf"/>
</dbReference>
<dbReference type="InterPro" id="IPR009073">
    <property type="entry name" value="HscB_oligo_C"/>
</dbReference>
<dbReference type="InterPro" id="IPR036869">
    <property type="entry name" value="J_dom_sf"/>
</dbReference>
<dbReference type="NCBIfam" id="TIGR00714">
    <property type="entry name" value="hscB"/>
    <property type="match status" value="1"/>
</dbReference>
<dbReference type="NCBIfam" id="NF003449">
    <property type="entry name" value="PRK05014.1"/>
    <property type="match status" value="1"/>
</dbReference>
<dbReference type="PANTHER" id="PTHR14021">
    <property type="entry name" value="IRON-SULFUR CLUSTER CO-CHAPERONE PROTEIN HSCB"/>
    <property type="match status" value="1"/>
</dbReference>
<dbReference type="PANTHER" id="PTHR14021:SF15">
    <property type="entry name" value="IRON-SULFUR CLUSTER CO-CHAPERONE PROTEIN HSCB"/>
    <property type="match status" value="1"/>
</dbReference>
<dbReference type="Pfam" id="PF00226">
    <property type="entry name" value="DnaJ"/>
    <property type="match status" value="1"/>
</dbReference>
<dbReference type="Pfam" id="PF07743">
    <property type="entry name" value="HSCB_C"/>
    <property type="match status" value="1"/>
</dbReference>
<dbReference type="SMART" id="SM00271">
    <property type="entry name" value="DnaJ"/>
    <property type="match status" value="1"/>
</dbReference>
<dbReference type="SUPFAM" id="SSF46565">
    <property type="entry name" value="Chaperone J-domain"/>
    <property type="match status" value="1"/>
</dbReference>
<dbReference type="SUPFAM" id="SSF47144">
    <property type="entry name" value="HSC20 (HSCB), C-terminal oligomerisation domain"/>
    <property type="match status" value="1"/>
</dbReference>
<dbReference type="PROSITE" id="PS50076">
    <property type="entry name" value="DNAJ_2"/>
    <property type="match status" value="1"/>
</dbReference>
<accession>A7FFX4</accession>
<proteinExistence type="inferred from homology"/>
<sequence length="174" mass="20649">MDYFTLFGLPARYLIDGNQLTTRYQELQRQFHPDRFATQPERERLASMQQAATINDAYQTLKHPLKRAEYMLSLQGFDLGNEQHTMRDTAFLMEQLELREELDAIERKPDAETLLAEFSRRLAQMTTTRTQQMVEQLDAQLWVQAADTVRKLRFLDKLQQQVEQLEERLFDDFA</sequence>
<reference key="1">
    <citation type="journal article" date="2007" name="PLoS Genet.">
        <title>The complete genome sequence of Yersinia pseudotuberculosis IP31758, the causative agent of Far East scarlet-like fever.</title>
        <authorList>
            <person name="Eppinger M."/>
            <person name="Rosovitz M.J."/>
            <person name="Fricke W.F."/>
            <person name="Rasko D.A."/>
            <person name="Kokorina G."/>
            <person name="Fayolle C."/>
            <person name="Lindler L.E."/>
            <person name="Carniel E."/>
            <person name="Ravel J."/>
        </authorList>
    </citation>
    <scope>NUCLEOTIDE SEQUENCE [LARGE SCALE GENOMIC DNA]</scope>
    <source>
        <strain>IP 31758</strain>
    </source>
</reference>
<organism>
    <name type="scientific">Yersinia pseudotuberculosis serotype O:1b (strain IP 31758)</name>
    <dbReference type="NCBI Taxonomy" id="349747"/>
    <lineage>
        <taxon>Bacteria</taxon>
        <taxon>Pseudomonadati</taxon>
        <taxon>Pseudomonadota</taxon>
        <taxon>Gammaproteobacteria</taxon>
        <taxon>Enterobacterales</taxon>
        <taxon>Yersiniaceae</taxon>
        <taxon>Yersinia</taxon>
    </lineage>
</organism>
<comment type="function">
    <text evidence="1">Co-chaperone involved in the maturation of iron-sulfur cluster-containing proteins. Seems to help targeting proteins to be folded toward HscA.</text>
</comment>
<comment type="subunit">
    <text evidence="1">Interacts with HscA and stimulates its ATPase activity. Interacts with IscU.</text>
</comment>
<comment type="similarity">
    <text evidence="1">Belongs to the HscB family.</text>
</comment>